<dbReference type="EC" id="6.5.1.2" evidence="1"/>
<dbReference type="EMBL" id="CP000247">
    <property type="protein sequence ID" value="ABG70424.1"/>
    <property type="molecule type" value="Genomic_DNA"/>
</dbReference>
<dbReference type="RefSeq" id="WP_000443689.1">
    <property type="nucleotide sequence ID" value="NC_008253.1"/>
</dbReference>
<dbReference type="SMR" id="Q0TF55"/>
<dbReference type="KEGG" id="ecp:ECP_2435"/>
<dbReference type="HOGENOM" id="CLU_007764_2_1_6"/>
<dbReference type="Proteomes" id="UP000009182">
    <property type="component" value="Chromosome"/>
</dbReference>
<dbReference type="GO" id="GO:0005829">
    <property type="term" value="C:cytosol"/>
    <property type="evidence" value="ECO:0007669"/>
    <property type="project" value="TreeGrafter"/>
</dbReference>
<dbReference type="GO" id="GO:0003677">
    <property type="term" value="F:DNA binding"/>
    <property type="evidence" value="ECO:0007669"/>
    <property type="project" value="InterPro"/>
</dbReference>
<dbReference type="GO" id="GO:0003911">
    <property type="term" value="F:DNA ligase (NAD+) activity"/>
    <property type="evidence" value="ECO:0007669"/>
    <property type="project" value="UniProtKB-UniRule"/>
</dbReference>
<dbReference type="GO" id="GO:0046872">
    <property type="term" value="F:metal ion binding"/>
    <property type="evidence" value="ECO:0007669"/>
    <property type="project" value="UniProtKB-KW"/>
</dbReference>
<dbReference type="GO" id="GO:0006281">
    <property type="term" value="P:DNA repair"/>
    <property type="evidence" value="ECO:0007669"/>
    <property type="project" value="UniProtKB-KW"/>
</dbReference>
<dbReference type="GO" id="GO:0006260">
    <property type="term" value="P:DNA replication"/>
    <property type="evidence" value="ECO:0007669"/>
    <property type="project" value="UniProtKB-KW"/>
</dbReference>
<dbReference type="CDD" id="cd17748">
    <property type="entry name" value="BRCT_DNA_ligase_like"/>
    <property type="match status" value="1"/>
</dbReference>
<dbReference type="CDD" id="cd00114">
    <property type="entry name" value="LIGANc"/>
    <property type="match status" value="1"/>
</dbReference>
<dbReference type="FunFam" id="1.10.150.20:FF:000006">
    <property type="entry name" value="DNA ligase"/>
    <property type="match status" value="1"/>
</dbReference>
<dbReference type="FunFam" id="1.10.150.20:FF:000007">
    <property type="entry name" value="DNA ligase"/>
    <property type="match status" value="1"/>
</dbReference>
<dbReference type="FunFam" id="1.10.287.610:FF:000002">
    <property type="entry name" value="DNA ligase"/>
    <property type="match status" value="1"/>
</dbReference>
<dbReference type="FunFam" id="2.40.50.140:FF:000012">
    <property type="entry name" value="DNA ligase"/>
    <property type="match status" value="1"/>
</dbReference>
<dbReference type="FunFam" id="3.30.470.30:FF:000001">
    <property type="entry name" value="DNA ligase"/>
    <property type="match status" value="1"/>
</dbReference>
<dbReference type="FunFam" id="3.40.50.10190:FF:000004">
    <property type="entry name" value="DNA ligase"/>
    <property type="match status" value="1"/>
</dbReference>
<dbReference type="FunFam" id="6.20.10.30:FF:000001">
    <property type="entry name" value="DNA ligase"/>
    <property type="match status" value="1"/>
</dbReference>
<dbReference type="Gene3D" id="6.20.10.30">
    <property type="match status" value="1"/>
</dbReference>
<dbReference type="Gene3D" id="1.10.150.20">
    <property type="entry name" value="5' to 3' exonuclease, C-terminal subdomain"/>
    <property type="match status" value="2"/>
</dbReference>
<dbReference type="Gene3D" id="3.40.50.10190">
    <property type="entry name" value="BRCT domain"/>
    <property type="match status" value="1"/>
</dbReference>
<dbReference type="Gene3D" id="3.30.470.30">
    <property type="entry name" value="DNA ligase/mRNA capping enzyme"/>
    <property type="match status" value="1"/>
</dbReference>
<dbReference type="Gene3D" id="1.10.287.610">
    <property type="entry name" value="Helix hairpin bin"/>
    <property type="match status" value="1"/>
</dbReference>
<dbReference type="Gene3D" id="2.40.50.140">
    <property type="entry name" value="Nucleic acid-binding proteins"/>
    <property type="match status" value="1"/>
</dbReference>
<dbReference type="HAMAP" id="MF_01588">
    <property type="entry name" value="DNA_ligase_A"/>
    <property type="match status" value="1"/>
</dbReference>
<dbReference type="InterPro" id="IPR001357">
    <property type="entry name" value="BRCT_dom"/>
</dbReference>
<dbReference type="InterPro" id="IPR036420">
    <property type="entry name" value="BRCT_dom_sf"/>
</dbReference>
<dbReference type="InterPro" id="IPR041663">
    <property type="entry name" value="DisA/LigA_HHH"/>
</dbReference>
<dbReference type="InterPro" id="IPR001679">
    <property type="entry name" value="DNA_ligase"/>
</dbReference>
<dbReference type="InterPro" id="IPR018239">
    <property type="entry name" value="DNA_ligase_AS"/>
</dbReference>
<dbReference type="InterPro" id="IPR033136">
    <property type="entry name" value="DNA_ligase_CS"/>
</dbReference>
<dbReference type="InterPro" id="IPR013839">
    <property type="entry name" value="DNAligase_adenylation"/>
</dbReference>
<dbReference type="InterPro" id="IPR013840">
    <property type="entry name" value="DNAligase_N"/>
</dbReference>
<dbReference type="InterPro" id="IPR003583">
    <property type="entry name" value="Hlx-hairpin-Hlx_DNA-bd_motif"/>
</dbReference>
<dbReference type="InterPro" id="IPR012340">
    <property type="entry name" value="NA-bd_OB-fold"/>
</dbReference>
<dbReference type="InterPro" id="IPR004150">
    <property type="entry name" value="NAD_DNA_ligase_OB"/>
</dbReference>
<dbReference type="InterPro" id="IPR010994">
    <property type="entry name" value="RuvA_2-like"/>
</dbReference>
<dbReference type="InterPro" id="IPR004149">
    <property type="entry name" value="Znf_DNAligase_C4"/>
</dbReference>
<dbReference type="NCBIfam" id="TIGR00575">
    <property type="entry name" value="dnlj"/>
    <property type="match status" value="1"/>
</dbReference>
<dbReference type="NCBIfam" id="NF005932">
    <property type="entry name" value="PRK07956.1"/>
    <property type="match status" value="1"/>
</dbReference>
<dbReference type="PANTHER" id="PTHR23389">
    <property type="entry name" value="CHROMOSOME TRANSMISSION FIDELITY FACTOR 18"/>
    <property type="match status" value="1"/>
</dbReference>
<dbReference type="PANTHER" id="PTHR23389:SF9">
    <property type="entry name" value="DNA LIGASE"/>
    <property type="match status" value="1"/>
</dbReference>
<dbReference type="Pfam" id="PF00533">
    <property type="entry name" value="BRCT"/>
    <property type="match status" value="1"/>
</dbReference>
<dbReference type="Pfam" id="PF01653">
    <property type="entry name" value="DNA_ligase_aden"/>
    <property type="match status" value="1"/>
</dbReference>
<dbReference type="Pfam" id="PF03120">
    <property type="entry name" value="DNA_ligase_OB"/>
    <property type="match status" value="1"/>
</dbReference>
<dbReference type="Pfam" id="PF03119">
    <property type="entry name" value="DNA_ligase_ZBD"/>
    <property type="match status" value="1"/>
</dbReference>
<dbReference type="Pfam" id="PF12826">
    <property type="entry name" value="HHH_2"/>
    <property type="match status" value="1"/>
</dbReference>
<dbReference type="Pfam" id="PF14520">
    <property type="entry name" value="HHH_5"/>
    <property type="match status" value="1"/>
</dbReference>
<dbReference type="Pfam" id="PF22745">
    <property type="entry name" value="Nlig-Ia"/>
    <property type="match status" value="1"/>
</dbReference>
<dbReference type="PIRSF" id="PIRSF001604">
    <property type="entry name" value="LigA"/>
    <property type="match status" value="1"/>
</dbReference>
<dbReference type="SMART" id="SM00292">
    <property type="entry name" value="BRCT"/>
    <property type="match status" value="1"/>
</dbReference>
<dbReference type="SMART" id="SM00278">
    <property type="entry name" value="HhH1"/>
    <property type="match status" value="4"/>
</dbReference>
<dbReference type="SMART" id="SM00532">
    <property type="entry name" value="LIGANc"/>
    <property type="match status" value="1"/>
</dbReference>
<dbReference type="SUPFAM" id="SSF52113">
    <property type="entry name" value="BRCT domain"/>
    <property type="match status" value="1"/>
</dbReference>
<dbReference type="SUPFAM" id="SSF56091">
    <property type="entry name" value="DNA ligase/mRNA capping enzyme, catalytic domain"/>
    <property type="match status" value="1"/>
</dbReference>
<dbReference type="SUPFAM" id="SSF50249">
    <property type="entry name" value="Nucleic acid-binding proteins"/>
    <property type="match status" value="1"/>
</dbReference>
<dbReference type="SUPFAM" id="SSF47781">
    <property type="entry name" value="RuvA domain 2-like"/>
    <property type="match status" value="1"/>
</dbReference>
<dbReference type="PROSITE" id="PS50172">
    <property type="entry name" value="BRCT"/>
    <property type="match status" value="1"/>
</dbReference>
<dbReference type="PROSITE" id="PS01055">
    <property type="entry name" value="DNA_LIGASE_N1"/>
    <property type="match status" value="1"/>
</dbReference>
<dbReference type="PROSITE" id="PS01056">
    <property type="entry name" value="DNA_LIGASE_N2"/>
    <property type="match status" value="1"/>
</dbReference>
<organism>
    <name type="scientific">Escherichia coli O6:K15:H31 (strain 536 / UPEC)</name>
    <dbReference type="NCBI Taxonomy" id="362663"/>
    <lineage>
        <taxon>Bacteria</taxon>
        <taxon>Pseudomonadati</taxon>
        <taxon>Pseudomonadota</taxon>
        <taxon>Gammaproteobacteria</taxon>
        <taxon>Enterobacterales</taxon>
        <taxon>Enterobacteriaceae</taxon>
        <taxon>Escherichia</taxon>
    </lineage>
</organism>
<protein>
    <recommendedName>
        <fullName evidence="1">DNA ligase</fullName>
        <ecNumber evidence="1">6.5.1.2</ecNumber>
    </recommendedName>
    <alternativeName>
        <fullName evidence="1">Polydeoxyribonucleotide synthase [NAD(+)]</fullName>
    </alternativeName>
</protein>
<comment type="function">
    <text evidence="1">DNA ligase that catalyzes the formation of phosphodiester linkages between 5'-phosphoryl and 3'-hydroxyl groups in double-stranded DNA using NAD as a coenzyme and as the energy source for the reaction. It is essential for DNA replication and repair of damaged DNA.</text>
</comment>
<comment type="catalytic activity">
    <reaction evidence="1">
        <text>NAD(+) + (deoxyribonucleotide)n-3'-hydroxyl + 5'-phospho-(deoxyribonucleotide)m = (deoxyribonucleotide)n+m + AMP + beta-nicotinamide D-nucleotide.</text>
        <dbReference type="EC" id="6.5.1.2"/>
    </reaction>
</comment>
<comment type="cofactor">
    <cofactor evidence="1">
        <name>Mg(2+)</name>
        <dbReference type="ChEBI" id="CHEBI:18420"/>
    </cofactor>
    <cofactor evidence="1">
        <name>Mn(2+)</name>
        <dbReference type="ChEBI" id="CHEBI:29035"/>
    </cofactor>
</comment>
<comment type="similarity">
    <text evidence="1">Belongs to the NAD-dependent DNA ligase family. LigA subfamily.</text>
</comment>
<keyword id="KW-0227">DNA damage</keyword>
<keyword id="KW-0234">DNA repair</keyword>
<keyword id="KW-0235">DNA replication</keyword>
<keyword id="KW-0436">Ligase</keyword>
<keyword id="KW-0460">Magnesium</keyword>
<keyword id="KW-0464">Manganese</keyword>
<keyword id="KW-0479">Metal-binding</keyword>
<keyword id="KW-0520">NAD</keyword>
<keyword id="KW-0862">Zinc</keyword>
<reference key="1">
    <citation type="journal article" date="2006" name="Mol. Microbiol.">
        <title>Role of pathogenicity island-associated integrases in the genome plasticity of uropathogenic Escherichia coli strain 536.</title>
        <authorList>
            <person name="Hochhut B."/>
            <person name="Wilde C."/>
            <person name="Balling G."/>
            <person name="Middendorf B."/>
            <person name="Dobrindt U."/>
            <person name="Brzuszkiewicz E."/>
            <person name="Gottschalk G."/>
            <person name="Carniel E."/>
            <person name="Hacker J."/>
        </authorList>
    </citation>
    <scope>NUCLEOTIDE SEQUENCE [LARGE SCALE GENOMIC DNA]</scope>
    <source>
        <strain>536 / UPEC</strain>
    </source>
</reference>
<feature type="chain" id="PRO_0000313235" description="DNA ligase">
    <location>
        <begin position="1"/>
        <end position="671"/>
    </location>
</feature>
<feature type="domain" description="BRCT" evidence="1">
    <location>
        <begin position="593"/>
        <end position="671"/>
    </location>
</feature>
<feature type="active site" description="N6-AMP-lysine intermediate" evidence="1">
    <location>
        <position position="115"/>
    </location>
</feature>
<feature type="binding site" evidence="1">
    <location>
        <begin position="32"/>
        <end position="36"/>
    </location>
    <ligand>
        <name>NAD(+)</name>
        <dbReference type="ChEBI" id="CHEBI:57540"/>
    </ligand>
</feature>
<feature type="binding site" evidence="1">
    <location>
        <begin position="81"/>
        <end position="82"/>
    </location>
    <ligand>
        <name>NAD(+)</name>
        <dbReference type="ChEBI" id="CHEBI:57540"/>
    </ligand>
</feature>
<feature type="binding site" evidence="1">
    <location>
        <position position="113"/>
    </location>
    <ligand>
        <name>NAD(+)</name>
        <dbReference type="ChEBI" id="CHEBI:57540"/>
    </ligand>
</feature>
<feature type="binding site" evidence="1">
    <location>
        <position position="136"/>
    </location>
    <ligand>
        <name>NAD(+)</name>
        <dbReference type="ChEBI" id="CHEBI:57540"/>
    </ligand>
</feature>
<feature type="binding site" evidence="1">
    <location>
        <position position="173"/>
    </location>
    <ligand>
        <name>NAD(+)</name>
        <dbReference type="ChEBI" id="CHEBI:57540"/>
    </ligand>
</feature>
<feature type="binding site" evidence="1">
    <location>
        <position position="290"/>
    </location>
    <ligand>
        <name>NAD(+)</name>
        <dbReference type="ChEBI" id="CHEBI:57540"/>
    </ligand>
</feature>
<feature type="binding site" evidence="1">
    <location>
        <position position="314"/>
    </location>
    <ligand>
        <name>NAD(+)</name>
        <dbReference type="ChEBI" id="CHEBI:57540"/>
    </ligand>
</feature>
<feature type="binding site" evidence="1">
    <location>
        <position position="408"/>
    </location>
    <ligand>
        <name>Zn(2+)</name>
        <dbReference type="ChEBI" id="CHEBI:29105"/>
    </ligand>
</feature>
<feature type="binding site" evidence="1">
    <location>
        <position position="411"/>
    </location>
    <ligand>
        <name>Zn(2+)</name>
        <dbReference type="ChEBI" id="CHEBI:29105"/>
    </ligand>
</feature>
<feature type="binding site" evidence="1">
    <location>
        <position position="426"/>
    </location>
    <ligand>
        <name>Zn(2+)</name>
        <dbReference type="ChEBI" id="CHEBI:29105"/>
    </ligand>
</feature>
<feature type="binding site" evidence="1">
    <location>
        <position position="432"/>
    </location>
    <ligand>
        <name>Zn(2+)</name>
        <dbReference type="ChEBI" id="CHEBI:29105"/>
    </ligand>
</feature>
<sequence length="671" mass="73648">MESIEQQLTELRTTLRHHEYLYHVMDAPEIPDAEYDRLMRELRELETKHPELITPDSPTQRVGAAPLAAFSQIRHEVPMLSLDNVFDEESFLAFNKRVQDRLKSNEKVTWCCELKLDGLAVSILYENGVLVSAATRGDGTTGEDITSNVRTIRAIPLKLHGENIPARLEVRGEVFLPQAGFEKINEDARRTGGKVFANPRNAAAGSLRQLDPRITAKRPLTFFCYGVGVLEGGELPDTHLGRLLQFKKWGLPVSDRVTLCESAEEVLAFYHKVEEDRPTLGFDIDGVVIKVNSLAQQEQLGFVARAPRWAVAFKFPAQEQMTFVRDVEFQVGRTGAITPVARLEPVHVAGVLVSNATLHNADEIERLGLRIGDKVVIRRAGDVIPQVVNVVLSERPEDTREVVFPTHCPVCGSDVERVEGEAVARCTGGLICGAQRKESLKHFVSRRAMDVDGMGDKIIDQLVEKEYVHTPADLFKLTAGKLTGLERMGPKSAQNVVNALEKAKETTFARFLYALGIREVGEATAAGLAAYFGTLEALEAASIEELQKVPDVGIVVASHVHNFFAEESNRNVISELLAEGVHWPEPIVINAEEIDSPFAGKTVVLTGSLSQMSRDDAKARLVELGAKVAGSVSKKTDLVIAGEAAGSKLAKAQELGIEVIDETEMLHLLGS</sequence>
<evidence type="ECO:0000255" key="1">
    <source>
        <dbReference type="HAMAP-Rule" id="MF_01588"/>
    </source>
</evidence>
<accession>Q0TF55</accession>
<gene>
    <name evidence="1" type="primary">ligA</name>
    <name type="ordered locus">ECP_2435</name>
</gene>
<name>DNLJ_ECOL5</name>
<proteinExistence type="inferred from homology"/>